<sequence>MAAKIIDGKTIAQQVRSEVAQKVQARIAAGLRAPGLAVVLVGSNPASQIYVASKRKACEEVGFVSRSYDLPETTSEAELLELIDTLNADNTIDGILVQLPLPAGIDNVKVLERIHPDKDVDGFHPYNVGRLCQRAPRLRPCTPRGIVTLLERYNIDTFGLNAVVIGASNIVGRPMSMELLLAGCTTTVTHRFTKNLRHHVENADLLIVAVGKPGFIPGDWIKEGAIVIDVGINRLENGKVVGDVVFEDAAKRASYITPVPGGVGPMTVATLIENTLQACVEYHDPQDE</sequence>
<dbReference type="EC" id="1.5.1.5" evidence="1"/>
<dbReference type="EC" id="3.5.4.9" evidence="1"/>
<dbReference type="EMBL" id="CP000946">
    <property type="protein sequence ID" value="ACA78717.1"/>
    <property type="molecule type" value="Genomic_DNA"/>
</dbReference>
<dbReference type="RefSeq" id="WP_000729160.1">
    <property type="nucleotide sequence ID" value="NZ_MTFT01000020.1"/>
</dbReference>
<dbReference type="SMR" id="B1IZ72"/>
<dbReference type="KEGG" id="ecl:EcolC_3093"/>
<dbReference type="HOGENOM" id="CLU_034045_2_1_6"/>
<dbReference type="UniPathway" id="UPA00193"/>
<dbReference type="GO" id="GO:0005829">
    <property type="term" value="C:cytosol"/>
    <property type="evidence" value="ECO:0007669"/>
    <property type="project" value="TreeGrafter"/>
</dbReference>
<dbReference type="GO" id="GO:0004477">
    <property type="term" value="F:methenyltetrahydrofolate cyclohydrolase activity"/>
    <property type="evidence" value="ECO:0007669"/>
    <property type="project" value="UniProtKB-UniRule"/>
</dbReference>
<dbReference type="GO" id="GO:0004488">
    <property type="term" value="F:methylenetetrahydrofolate dehydrogenase (NADP+) activity"/>
    <property type="evidence" value="ECO:0007669"/>
    <property type="project" value="UniProtKB-UniRule"/>
</dbReference>
<dbReference type="GO" id="GO:0000105">
    <property type="term" value="P:L-histidine biosynthetic process"/>
    <property type="evidence" value="ECO:0007669"/>
    <property type="project" value="UniProtKB-KW"/>
</dbReference>
<dbReference type="GO" id="GO:0009086">
    <property type="term" value="P:methionine biosynthetic process"/>
    <property type="evidence" value="ECO:0007669"/>
    <property type="project" value="UniProtKB-KW"/>
</dbReference>
<dbReference type="GO" id="GO:0006164">
    <property type="term" value="P:purine nucleotide biosynthetic process"/>
    <property type="evidence" value="ECO:0007669"/>
    <property type="project" value="UniProtKB-KW"/>
</dbReference>
<dbReference type="GO" id="GO:0035999">
    <property type="term" value="P:tetrahydrofolate interconversion"/>
    <property type="evidence" value="ECO:0007669"/>
    <property type="project" value="UniProtKB-UniRule"/>
</dbReference>
<dbReference type="CDD" id="cd01080">
    <property type="entry name" value="NAD_bind_m-THF_DH_Cyclohyd"/>
    <property type="match status" value="1"/>
</dbReference>
<dbReference type="FunFam" id="3.40.50.10860:FF:000001">
    <property type="entry name" value="Bifunctional protein FolD"/>
    <property type="match status" value="1"/>
</dbReference>
<dbReference type="FunFam" id="3.40.50.720:FF:000006">
    <property type="entry name" value="Bifunctional protein FolD"/>
    <property type="match status" value="1"/>
</dbReference>
<dbReference type="Gene3D" id="3.40.50.10860">
    <property type="entry name" value="Leucine Dehydrogenase, chain A, domain 1"/>
    <property type="match status" value="1"/>
</dbReference>
<dbReference type="Gene3D" id="3.40.50.720">
    <property type="entry name" value="NAD(P)-binding Rossmann-like Domain"/>
    <property type="match status" value="1"/>
</dbReference>
<dbReference type="HAMAP" id="MF_01576">
    <property type="entry name" value="THF_DHG_CYH"/>
    <property type="match status" value="1"/>
</dbReference>
<dbReference type="InterPro" id="IPR046346">
    <property type="entry name" value="Aminoacid_DH-like_N_sf"/>
</dbReference>
<dbReference type="InterPro" id="IPR036291">
    <property type="entry name" value="NAD(P)-bd_dom_sf"/>
</dbReference>
<dbReference type="InterPro" id="IPR000672">
    <property type="entry name" value="THF_DH/CycHdrlase"/>
</dbReference>
<dbReference type="InterPro" id="IPR020630">
    <property type="entry name" value="THF_DH/CycHdrlase_cat_dom"/>
</dbReference>
<dbReference type="InterPro" id="IPR020867">
    <property type="entry name" value="THF_DH/CycHdrlase_CS"/>
</dbReference>
<dbReference type="InterPro" id="IPR020631">
    <property type="entry name" value="THF_DH/CycHdrlase_NAD-bd_dom"/>
</dbReference>
<dbReference type="NCBIfam" id="NF008058">
    <property type="entry name" value="PRK10792.1"/>
    <property type="match status" value="1"/>
</dbReference>
<dbReference type="NCBIfam" id="NF010783">
    <property type="entry name" value="PRK14186.1"/>
    <property type="match status" value="1"/>
</dbReference>
<dbReference type="PANTHER" id="PTHR48099:SF5">
    <property type="entry name" value="C-1-TETRAHYDROFOLATE SYNTHASE, CYTOPLASMIC"/>
    <property type="match status" value="1"/>
</dbReference>
<dbReference type="PANTHER" id="PTHR48099">
    <property type="entry name" value="C-1-TETRAHYDROFOLATE SYNTHASE, CYTOPLASMIC-RELATED"/>
    <property type="match status" value="1"/>
</dbReference>
<dbReference type="Pfam" id="PF00763">
    <property type="entry name" value="THF_DHG_CYH"/>
    <property type="match status" value="1"/>
</dbReference>
<dbReference type="Pfam" id="PF02882">
    <property type="entry name" value="THF_DHG_CYH_C"/>
    <property type="match status" value="1"/>
</dbReference>
<dbReference type="PRINTS" id="PR00085">
    <property type="entry name" value="THFDHDRGNASE"/>
</dbReference>
<dbReference type="SUPFAM" id="SSF53223">
    <property type="entry name" value="Aminoacid dehydrogenase-like, N-terminal domain"/>
    <property type="match status" value="1"/>
</dbReference>
<dbReference type="SUPFAM" id="SSF51735">
    <property type="entry name" value="NAD(P)-binding Rossmann-fold domains"/>
    <property type="match status" value="1"/>
</dbReference>
<dbReference type="PROSITE" id="PS00766">
    <property type="entry name" value="THF_DHG_CYH_1"/>
    <property type="match status" value="1"/>
</dbReference>
<dbReference type="PROSITE" id="PS00767">
    <property type="entry name" value="THF_DHG_CYH_2"/>
    <property type="match status" value="1"/>
</dbReference>
<protein>
    <recommendedName>
        <fullName evidence="1">Bifunctional protein FolD</fullName>
    </recommendedName>
    <domain>
        <recommendedName>
            <fullName evidence="1">Methylenetetrahydrofolate dehydrogenase</fullName>
            <ecNumber evidence="1">1.5.1.5</ecNumber>
        </recommendedName>
    </domain>
    <domain>
        <recommendedName>
            <fullName evidence="1">Methenyltetrahydrofolate cyclohydrolase</fullName>
            <ecNumber evidence="1">3.5.4.9</ecNumber>
        </recommendedName>
    </domain>
</protein>
<feature type="chain" id="PRO_1000087900" description="Bifunctional protein FolD">
    <location>
        <begin position="1"/>
        <end position="288"/>
    </location>
</feature>
<feature type="binding site" evidence="1">
    <location>
        <begin position="166"/>
        <end position="168"/>
    </location>
    <ligand>
        <name>NADP(+)</name>
        <dbReference type="ChEBI" id="CHEBI:58349"/>
    </ligand>
</feature>
<feature type="binding site" evidence="1">
    <location>
        <position position="232"/>
    </location>
    <ligand>
        <name>NADP(+)</name>
        <dbReference type="ChEBI" id="CHEBI:58349"/>
    </ligand>
</feature>
<proteinExistence type="inferred from homology"/>
<name>FOLD_ECOLC</name>
<organism>
    <name type="scientific">Escherichia coli (strain ATCC 8739 / DSM 1576 / NBRC 3972 / NCIMB 8545 / WDCM 00012 / Crooks)</name>
    <dbReference type="NCBI Taxonomy" id="481805"/>
    <lineage>
        <taxon>Bacteria</taxon>
        <taxon>Pseudomonadati</taxon>
        <taxon>Pseudomonadota</taxon>
        <taxon>Gammaproteobacteria</taxon>
        <taxon>Enterobacterales</taxon>
        <taxon>Enterobacteriaceae</taxon>
        <taxon>Escherichia</taxon>
    </lineage>
</organism>
<evidence type="ECO:0000255" key="1">
    <source>
        <dbReference type="HAMAP-Rule" id="MF_01576"/>
    </source>
</evidence>
<reference key="1">
    <citation type="submission" date="2008-02" db="EMBL/GenBank/DDBJ databases">
        <title>Complete sequence of Escherichia coli C str. ATCC 8739.</title>
        <authorList>
            <person name="Copeland A."/>
            <person name="Lucas S."/>
            <person name="Lapidus A."/>
            <person name="Glavina del Rio T."/>
            <person name="Dalin E."/>
            <person name="Tice H."/>
            <person name="Bruce D."/>
            <person name="Goodwin L."/>
            <person name="Pitluck S."/>
            <person name="Kiss H."/>
            <person name="Brettin T."/>
            <person name="Detter J.C."/>
            <person name="Han C."/>
            <person name="Kuske C.R."/>
            <person name="Schmutz J."/>
            <person name="Larimer F."/>
            <person name="Land M."/>
            <person name="Hauser L."/>
            <person name="Kyrpides N."/>
            <person name="Mikhailova N."/>
            <person name="Ingram L."/>
            <person name="Richardson P."/>
        </authorList>
    </citation>
    <scope>NUCLEOTIDE SEQUENCE [LARGE SCALE GENOMIC DNA]</scope>
    <source>
        <strain>ATCC 8739 / DSM 1576 / NBRC 3972 / NCIMB 8545 / WDCM 00012 / Crooks</strain>
    </source>
</reference>
<gene>
    <name evidence="1" type="primary">folD</name>
    <name type="ordered locus">EcolC_3093</name>
</gene>
<comment type="function">
    <text evidence="1">Catalyzes the oxidation of 5,10-methylenetetrahydrofolate to 5,10-methenyltetrahydrofolate and then the hydrolysis of 5,10-methenyltetrahydrofolate to 10-formyltetrahydrofolate.</text>
</comment>
<comment type="catalytic activity">
    <reaction evidence="1">
        <text>(6R)-5,10-methylene-5,6,7,8-tetrahydrofolate + NADP(+) = (6R)-5,10-methenyltetrahydrofolate + NADPH</text>
        <dbReference type="Rhea" id="RHEA:22812"/>
        <dbReference type="ChEBI" id="CHEBI:15636"/>
        <dbReference type="ChEBI" id="CHEBI:57455"/>
        <dbReference type="ChEBI" id="CHEBI:57783"/>
        <dbReference type="ChEBI" id="CHEBI:58349"/>
        <dbReference type="EC" id="1.5.1.5"/>
    </reaction>
</comment>
<comment type="catalytic activity">
    <reaction evidence="1">
        <text>(6R)-5,10-methenyltetrahydrofolate + H2O = (6R)-10-formyltetrahydrofolate + H(+)</text>
        <dbReference type="Rhea" id="RHEA:23700"/>
        <dbReference type="ChEBI" id="CHEBI:15377"/>
        <dbReference type="ChEBI" id="CHEBI:15378"/>
        <dbReference type="ChEBI" id="CHEBI:57455"/>
        <dbReference type="ChEBI" id="CHEBI:195366"/>
        <dbReference type="EC" id="3.5.4.9"/>
    </reaction>
</comment>
<comment type="pathway">
    <text evidence="1">One-carbon metabolism; tetrahydrofolate interconversion.</text>
</comment>
<comment type="subunit">
    <text evidence="1">Homodimer.</text>
</comment>
<comment type="similarity">
    <text evidence="1">Belongs to the tetrahydrofolate dehydrogenase/cyclohydrolase family.</text>
</comment>
<keyword id="KW-0028">Amino-acid biosynthesis</keyword>
<keyword id="KW-0368">Histidine biosynthesis</keyword>
<keyword id="KW-0378">Hydrolase</keyword>
<keyword id="KW-0486">Methionine biosynthesis</keyword>
<keyword id="KW-0511">Multifunctional enzyme</keyword>
<keyword id="KW-0521">NADP</keyword>
<keyword id="KW-0554">One-carbon metabolism</keyword>
<keyword id="KW-0560">Oxidoreductase</keyword>
<keyword id="KW-0658">Purine biosynthesis</keyword>
<accession>B1IZ72</accession>